<proteinExistence type="evidence at protein level"/>
<feature type="chain" id="PRO_0000106631" description="Sperm protein EM1">
    <location>
        <begin position="1"/>
        <end position="34" status="greater than"/>
    </location>
</feature>
<feature type="repeat" description="1">
    <location>
        <begin position="3"/>
        <end position="4"/>
    </location>
</feature>
<feature type="repeat" description="2">
    <location>
        <begin position="5"/>
        <end position="6"/>
    </location>
</feature>
<feature type="repeat" description="3">
    <location>
        <begin position="7"/>
        <end position="8"/>
    </location>
</feature>
<feature type="repeat" description="4">
    <location>
        <begin position="9"/>
        <end position="10"/>
    </location>
</feature>
<feature type="repeat" description="5">
    <location>
        <begin position="11"/>
        <end position="12"/>
    </location>
</feature>
<feature type="repeat" description="6">
    <location>
        <begin position="13"/>
        <end position="14"/>
    </location>
</feature>
<feature type="repeat" description="7">
    <location>
        <begin position="15"/>
        <end position="16"/>
    </location>
</feature>
<feature type="region of interest" description="Disordered" evidence="1">
    <location>
        <begin position="1"/>
        <end position="34"/>
    </location>
</feature>
<feature type="region of interest" description="7 X 2 AA tandem repeats of S-[KR]">
    <location>
        <begin position="3"/>
        <end position="16"/>
    </location>
</feature>
<feature type="compositionally biased region" description="Basic residues" evidence="1">
    <location>
        <begin position="1"/>
        <end position="17"/>
    </location>
</feature>
<feature type="compositionally biased region" description="Low complexity" evidence="1">
    <location>
        <begin position="18"/>
        <end position="34"/>
    </location>
</feature>
<feature type="non-terminal residue">
    <location>
        <position position="34"/>
    </location>
</feature>
<name>EM1_ENSMI</name>
<keyword id="KW-0903">Direct protein sequencing</keyword>
<keyword id="KW-0238">DNA-binding</keyword>
<keyword id="KW-0539">Nucleus</keyword>
<keyword id="KW-0677">Repeat</keyword>
<reference key="1">
    <citation type="journal article" date="1992" name="Biochim. Biophys. Acta">
        <title>Molluscan sperm proteins: Ensis minor.</title>
        <authorList>
            <person name="Giancotti V."/>
            <person name="Buratti E."/>
            <person name="Santucci A."/>
            <person name="Neri P."/>
            <person name="Crane-Robinson C."/>
        </authorList>
    </citation>
    <scope>PROTEIN SEQUENCE</scope>
    <source>
        <tissue>Sperm</tissue>
    </source>
</reference>
<sequence>AGSKSRSRSRSRSRSKSPAKSASPKSAASPRASR</sequence>
<evidence type="ECO:0000256" key="1">
    <source>
        <dbReference type="SAM" id="MobiDB-lite"/>
    </source>
</evidence>
<protein>
    <recommendedName>
        <fullName>Sperm protein EM1</fullName>
    </recommendedName>
</protein>
<accession>P27205</accession>
<organism>
    <name type="scientific">Ensis minor</name>
    <name type="common">Razor shell</name>
    <name type="synonym">Minor jackknife clam</name>
    <dbReference type="NCBI Taxonomy" id="6587"/>
    <lineage>
        <taxon>Eukaryota</taxon>
        <taxon>Metazoa</taxon>
        <taxon>Spiralia</taxon>
        <taxon>Lophotrochozoa</taxon>
        <taxon>Mollusca</taxon>
        <taxon>Bivalvia</taxon>
        <taxon>Autobranchia</taxon>
        <taxon>Heteroconchia</taxon>
        <taxon>Euheterodonta</taxon>
        <taxon>Imparidentia</taxon>
        <taxon>Adapedonta</taxon>
        <taxon>Solenoidea</taxon>
        <taxon>Pharidae</taxon>
        <taxon>Ensis</taxon>
    </lineage>
</organism>
<comment type="subcellular location">
    <subcellularLocation>
        <location>Nucleus</location>
    </subcellularLocation>
</comment>
<comment type="tissue specificity">
    <text>Sperm.</text>
</comment>
<dbReference type="PIR" id="S21080">
    <property type="entry name" value="S21080"/>
</dbReference>
<dbReference type="SMR" id="P27205"/>
<dbReference type="GO" id="GO:0005634">
    <property type="term" value="C:nucleus"/>
    <property type="evidence" value="ECO:0007669"/>
    <property type="project" value="UniProtKB-SubCell"/>
</dbReference>
<dbReference type="GO" id="GO:0003677">
    <property type="term" value="F:DNA binding"/>
    <property type="evidence" value="ECO:0007669"/>
    <property type="project" value="UniProtKB-KW"/>
</dbReference>